<accession>C7BKP9</accession>
<comment type="function">
    <text evidence="2">Toxin that acts on host cells by modifying Rho proteins by tyrosine GlcNAcylation and heterotrimeric G alpha proteins by deamidation. Catalyzes the mono-O-GlcNAcylation of small GTPases of the Rho family (RhoA, RhoB, RhoC, Rac1, Rac2, Rac3, Cdc42) in eukaryotic host cells at the conserved tyrosine residue located in the switch I region (Tyr-32/34), using UDP-N-acetylglucosamine (UDP-GlcNAc) as the sugar donor; other GTPases of the Rho, Ras or Rab families are not substrates. Tyrosine glycosylation inhibits Rho activation and prevents interaction with downstream effectors, resulting in actin disassembly, inhibition of phagocytosis, cell rounding, and toxicity toward insects and mammalian cells. Also catalyzes the deamidation of the catalytic glutamine in heterotrimeric G alpha proteins (Gi, Gq/11), which blocks GTP hydrolysis and arrests the G proteins in a permanent active state leading to activation of Rho GTPases. Thus, PaTox hijacks host GTPase signaling in a bidirectional manner by deamidation-induced activation and glycosylation-induced inactivation of GTPases.</text>
</comment>
<comment type="catalytic activity">
    <reaction evidence="2">
        <text>L-tyrosyl-[protein] + UDP-N-acetyl-alpha-D-glucosamine = O-(N-acetyl-alpha-D-glucosaminyl)-L-tyrosyl-[protein] + UDP + H(+)</text>
        <dbReference type="Rhea" id="RHEA:51536"/>
        <dbReference type="Rhea" id="RHEA-COMP:10136"/>
        <dbReference type="Rhea" id="RHEA-COMP:13016"/>
        <dbReference type="ChEBI" id="CHEBI:15378"/>
        <dbReference type="ChEBI" id="CHEBI:46858"/>
        <dbReference type="ChEBI" id="CHEBI:57705"/>
        <dbReference type="ChEBI" id="CHEBI:58223"/>
        <dbReference type="ChEBI" id="CHEBI:134208"/>
    </reaction>
</comment>
<comment type="catalytic activity">
    <reaction evidence="2">
        <text>L-glutaminyl-[protein] + H2O = L-glutamyl-[protein] + NH4(+)</text>
        <dbReference type="Rhea" id="RHEA:16441"/>
        <dbReference type="Rhea" id="RHEA-COMP:10207"/>
        <dbReference type="Rhea" id="RHEA-COMP:10208"/>
        <dbReference type="ChEBI" id="CHEBI:15377"/>
        <dbReference type="ChEBI" id="CHEBI:28938"/>
        <dbReference type="ChEBI" id="CHEBI:29973"/>
        <dbReference type="ChEBI" id="CHEBI:30011"/>
        <dbReference type="EC" id="3.5.1.44"/>
    </reaction>
</comment>
<comment type="cofactor">
    <cofactor evidence="2">
        <name>a divalent metal cation</name>
        <dbReference type="ChEBI" id="CHEBI:60240"/>
    </cofactor>
    <text evidence="2">A Ca(2+) ion is seen in the structure.</text>
</comment>
<comment type="subcellular location">
    <subcellularLocation>
        <location evidence="5">Secreted</location>
    </subcellularLocation>
    <subcellularLocation>
        <location evidence="3">Host cell membrane</location>
        <topology evidence="3">Peripheral membrane protein</topology>
        <orientation evidence="3">Cytoplasmic side</orientation>
    </subcellularLocation>
    <text evidence="3">Associates with the negatively charged inner leaflet of the plasma membrane via interaction with phosphatidylserine and phosphatidylinositolphosphates. Plasma membrane localization of PaTox is essential for cytotoxicity. The glycosyltransferase domain alone is sufficient to localize at the plasma membrane.</text>
</comment>
<comment type="domain">
    <text evidence="2">In the C-terminal region, contains two catalytic domains: a glycosyltransferase (PaToxG) and a deamidase domain (PaToxD). The N-terminal region contains a receptor-translocation domain necessary for toxin entry into the cytoplasm of host cell.</text>
</comment>
<comment type="miscellaneous">
    <text evidence="2">The active GTP-bound conformation of Rho is the preferred substrate for PaTox-induced glycosylation.</text>
</comment>
<name>PATOX_PHOAA</name>
<gene>
    <name evidence="7" type="ordered locus">PAU_02230</name>
</gene>
<dbReference type="EC" id="2.4.1.-" evidence="2"/>
<dbReference type="EC" id="3.5.1.44" evidence="2"/>
<dbReference type="EMBL" id="FM162591">
    <property type="protein sequence ID" value="CAQ84322.1"/>
    <property type="molecule type" value="Genomic_DNA"/>
</dbReference>
<dbReference type="PDB" id="4MIX">
    <property type="method" value="X-ray"/>
    <property type="resolution" value="1.80 A"/>
    <property type="chains" value="A/B=2114-2449"/>
</dbReference>
<dbReference type="PDB" id="6HV6">
    <property type="method" value="X-ray"/>
    <property type="resolution" value="2.00 A"/>
    <property type="chains" value="A=1701-2114"/>
</dbReference>
<dbReference type="PDBsum" id="4MIX"/>
<dbReference type="PDBsum" id="6HV6"/>
<dbReference type="SMR" id="C7BKP9"/>
<dbReference type="STRING" id="291112.PAU_02230"/>
<dbReference type="KEGG" id="pay:PAU_02230"/>
<dbReference type="eggNOG" id="COG3774">
    <property type="taxonomic scope" value="Bacteria"/>
</dbReference>
<dbReference type="eggNOG" id="COG5539">
    <property type="taxonomic scope" value="Bacteria"/>
</dbReference>
<dbReference type="EvolutionaryTrace" id="C7BKP9"/>
<dbReference type="Proteomes" id="UP000002747">
    <property type="component" value="Chromosome"/>
</dbReference>
<dbReference type="GO" id="GO:0005576">
    <property type="term" value="C:extracellular region"/>
    <property type="evidence" value="ECO:0007669"/>
    <property type="project" value="UniProtKB-SubCell"/>
</dbReference>
<dbReference type="GO" id="GO:0020002">
    <property type="term" value="C:host cell plasma membrane"/>
    <property type="evidence" value="ECO:0007669"/>
    <property type="project" value="UniProtKB-SubCell"/>
</dbReference>
<dbReference type="GO" id="GO:0016020">
    <property type="term" value="C:membrane"/>
    <property type="evidence" value="ECO:0007669"/>
    <property type="project" value="UniProtKB-KW"/>
</dbReference>
<dbReference type="GO" id="GO:0005509">
    <property type="term" value="F:calcium ion binding"/>
    <property type="evidence" value="ECO:0000314"/>
    <property type="project" value="UniProtKB"/>
</dbReference>
<dbReference type="GO" id="GO:0000030">
    <property type="term" value="F:mannosyltransferase activity"/>
    <property type="evidence" value="ECO:0007669"/>
    <property type="project" value="TreeGrafter"/>
</dbReference>
<dbReference type="GO" id="GO:0016262">
    <property type="term" value="F:protein N-acetylglucosaminyltransferase activity"/>
    <property type="evidence" value="ECO:0000314"/>
    <property type="project" value="UniProtKB"/>
</dbReference>
<dbReference type="GO" id="GO:0050568">
    <property type="term" value="F:protein-glutamine glutaminase activity"/>
    <property type="evidence" value="ECO:0000314"/>
    <property type="project" value="UniProtKB"/>
</dbReference>
<dbReference type="GO" id="GO:0090729">
    <property type="term" value="F:toxin activity"/>
    <property type="evidence" value="ECO:0007669"/>
    <property type="project" value="UniProtKB-KW"/>
</dbReference>
<dbReference type="GO" id="GO:0051999">
    <property type="term" value="P:mannosyl-inositol phosphorylceramide biosynthetic process"/>
    <property type="evidence" value="ECO:0007669"/>
    <property type="project" value="TreeGrafter"/>
</dbReference>
<dbReference type="GO" id="GO:0044083">
    <property type="term" value="P:symbiont-mediated perturbation of host Rho small GTPase signal transduction"/>
    <property type="evidence" value="ECO:0000314"/>
    <property type="project" value="UniProtKB"/>
</dbReference>
<dbReference type="CDD" id="cd20488">
    <property type="entry name" value="peptidase_C58-like"/>
    <property type="match status" value="1"/>
</dbReference>
<dbReference type="Gene3D" id="3.90.550.20">
    <property type="match status" value="1"/>
</dbReference>
<dbReference type="Gene3D" id="3.10.670.10">
    <property type="entry name" value="Secreted effector protein ssei"/>
    <property type="match status" value="1"/>
</dbReference>
<dbReference type="InterPro" id="IPR051706">
    <property type="entry name" value="Glycosyltransferase_domain"/>
</dbReference>
<dbReference type="InterPro" id="IPR007577">
    <property type="entry name" value="GlycoTrfase_DXD_sugar-bd_CS"/>
</dbReference>
<dbReference type="InterPro" id="IPR029044">
    <property type="entry name" value="Nucleotide-diphossugar_trans"/>
</dbReference>
<dbReference type="InterPro" id="IPR028907">
    <property type="entry name" value="Tox-PLDMTX_dom"/>
</dbReference>
<dbReference type="PANTHER" id="PTHR32385:SF15">
    <property type="entry name" value="INOSITOL PHOSPHOCERAMIDE MANNOSYLTRANSFERASE 1"/>
    <property type="match status" value="1"/>
</dbReference>
<dbReference type="PANTHER" id="PTHR32385">
    <property type="entry name" value="MANNOSYL PHOSPHORYLINOSITOL CERAMIDE SYNTHASE"/>
    <property type="match status" value="1"/>
</dbReference>
<dbReference type="Pfam" id="PF04488">
    <property type="entry name" value="Gly_transf_sug"/>
    <property type="match status" value="1"/>
</dbReference>
<dbReference type="Pfam" id="PF15645">
    <property type="entry name" value="Tox-PLDMTX"/>
    <property type="match status" value="1"/>
</dbReference>
<dbReference type="SUPFAM" id="SSF53448">
    <property type="entry name" value="Nucleotide-diphospho-sugar transferases"/>
    <property type="match status" value="1"/>
</dbReference>
<feature type="chain" id="PRO_0000434568" description="Toxin PAU_02230">
    <location>
        <begin position="1"/>
        <end position="2957"/>
    </location>
</feature>
<feature type="region of interest" description="Disordered" evidence="1">
    <location>
        <begin position="949"/>
        <end position="968"/>
    </location>
</feature>
<feature type="region of interest" description="Tyrosine glycosyltransferase PaToxG" evidence="6">
    <location>
        <begin position="2115"/>
        <end position="2449"/>
    </location>
</feature>
<feature type="region of interest" description="Membrane localization domain that interacts with the inner leaflet of the plasma membrane" evidence="3">
    <location>
        <begin position="2115"/>
        <end position="2144"/>
    </location>
</feature>
<feature type="region of interest" description="SseI-like deamidase PaToxD" evidence="6">
    <location>
        <begin position="2450"/>
        <end position="2672"/>
    </location>
</feature>
<feature type="region of interest" description="Disordered" evidence="1">
    <location>
        <begin position="2667"/>
        <end position="2705"/>
    </location>
</feature>
<feature type="short sequence motif" description="DxDD motif" evidence="6">
    <location>
        <begin position="2276"/>
        <end position="2279"/>
    </location>
</feature>
<feature type="active site" description="For deamidase activity" evidence="6">
    <location>
        <position position="2509"/>
    </location>
</feature>
<feature type="active site" description="For deamidase activity" evidence="6">
    <location>
        <position position="2547"/>
    </location>
</feature>
<feature type="active site" description="For deamidase activity" evidence="6">
    <location>
        <position position="2562"/>
    </location>
</feature>
<feature type="binding site" evidence="2">
    <location>
        <begin position="2169"/>
        <end position="2171"/>
    </location>
    <ligand>
        <name>UDP-N-acetyl-alpha-D-glucosamine</name>
        <dbReference type="ChEBI" id="CHEBI:57705"/>
    </ligand>
</feature>
<feature type="binding site" evidence="2">
    <location>
        <begin position="2259"/>
        <end position="2260"/>
    </location>
    <ligand>
        <name>UDP-N-acetyl-alpha-D-glucosamine</name>
        <dbReference type="ChEBI" id="CHEBI:57705"/>
    </ligand>
</feature>
<feature type="binding site" evidence="6 9">
    <location>
        <position position="2276"/>
    </location>
    <ligand>
        <name>a divalent metal cation</name>
        <dbReference type="ChEBI" id="CHEBI:60240"/>
    </ligand>
</feature>
<feature type="binding site" evidence="6 9">
    <location>
        <position position="2278"/>
    </location>
    <ligand>
        <name>a divalent metal cation</name>
        <dbReference type="ChEBI" id="CHEBI:60240"/>
    </ligand>
</feature>
<feature type="binding site" evidence="2">
    <location>
        <position position="2312"/>
    </location>
    <ligand>
        <name>UDP-N-acetyl-alpha-D-glucosamine</name>
        <dbReference type="ChEBI" id="CHEBI:57705"/>
    </ligand>
</feature>
<feature type="mutagenesis site" description="Abrogates plasma membrane localization, resulting in a cytosolic distribution of this mutant protein. Loss of toxic activity on host cells during the first hours of incubation. No effect on glycosyltransferase activity and interaction with RhoA." evidence="3">
    <original>RK</original>
    <variation>EE</variation>
    <location>
        <begin position="2134"/>
        <end position="2135"/>
    </location>
</feature>
<feature type="mutagenesis site" description="Abrogates plasma membrane localization, resulting in a cytosolic distribution of this mutant protein. Loss of toxic activity on host cells during the first hours of incubation. No effect on glycosyltransferase activity and interaction with RhoA." evidence="3">
    <original>RK</original>
    <variation>EE</variation>
    <location>
        <begin position="2139"/>
        <end position="2140"/>
    </location>
</feature>
<feature type="mutagenesis site" description="7-fold reduction in glycosyltransferase activity." evidence="2">
    <original>W</original>
    <variation>A</variation>
    <location>
        <position position="2170"/>
    </location>
</feature>
<feature type="mutagenesis site" description="10000-fold reduction in glycosyltransferase activity. Reduced cell toxicity." evidence="2">
    <original>D</original>
    <variation>A</variation>
    <location>
        <position position="2260"/>
    </location>
</feature>
<feature type="mutagenesis site" description="2000-fold reduction in glycosyltransferase activity. Reduced cell toxicity." evidence="2">
    <original>R</original>
    <variation>A</variation>
    <location>
        <position position="2263"/>
    </location>
</feature>
<feature type="mutagenesis site" description="Loss of glycosyltransferase activity. Reduced toxicity in insect larvae. Loss of the ability to block phagocytosis in mammalian macrophages. Loss of effect on actin skeleton." evidence="2">
    <original>DID</original>
    <variation>NIN</variation>
    <location>
        <begin position="2276"/>
        <end position="2278"/>
    </location>
</feature>
<feature type="mutagenesis site" description="16700-fold reduction in glycosyltransferase activity." evidence="2">
    <original>D</original>
    <variation>N</variation>
    <location>
        <position position="2276"/>
    </location>
</feature>
<feature type="mutagenesis site" description="333-fold reduction in glycosyltransferase activity." evidence="2">
    <original>D</original>
    <variation>N</variation>
    <location>
        <position position="2278"/>
    </location>
</feature>
<feature type="mutagenesis site" description="700-fold reduction in glycosyltransferase activity." evidence="2">
    <original>D</original>
    <variation>N</variation>
    <location>
        <position position="2279"/>
    </location>
</feature>
<feature type="mutagenesis site" description="1.3-fold reduction in glycosyltransferase activity." evidence="2">
    <original>N</original>
    <variation>A</variation>
    <location>
        <position position="2312"/>
    </location>
</feature>
<feature type="mutagenesis site" description="Loss of deamidase activity." evidence="2">
    <original>C</original>
    <variation>S</variation>
    <location>
        <position position="2509"/>
    </location>
</feature>
<feature type="strand" evidence="11">
    <location>
        <begin position="1731"/>
        <end position="1734"/>
    </location>
</feature>
<feature type="strand" evidence="11">
    <location>
        <begin position="1737"/>
        <end position="1740"/>
    </location>
</feature>
<feature type="helix" evidence="11">
    <location>
        <begin position="1746"/>
        <end position="1759"/>
    </location>
</feature>
<feature type="helix" evidence="11">
    <location>
        <begin position="1767"/>
        <end position="1781"/>
    </location>
</feature>
<feature type="turn" evidence="11">
    <location>
        <begin position="1782"/>
        <end position="1784"/>
    </location>
</feature>
<feature type="helix" evidence="11">
    <location>
        <begin position="1786"/>
        <end position="1791"/>
    </location>
</feature>
<feature type="helix" evidence="11">
    <location>
        <begin position="1796"/>
        <end position="1804"/>
    </location>
</feature>
<feature type="helix" evidence="11">
    <location>
        <begin position="1810"/>
        <end position="1842"/>
    </location>
</feature>
<feature type="strand" evidence="11">
    <location>
        <begin position="1847"/>
        <end position="1851"/>
    </location>
</feature>
<feature type="helix" evidence="11">
    <location>
        <begin position="1854"/>
        <end position="1857"/>
    </location>
</feature>
<feature type="turn" evidence="11">
    <location>
        <begin position="1858"/>
        <end position="1860"/>
    </location>
</feature>
<feature type="helix" evidence="11">
    <location>
        <begin position="1865"/>
        <end position="1877"/>
    </location>
</feature>
<feature type="helix" evidence="11">
    <location>
        <begin position="1881"/>
        <end position="1890"/>
    </location>
</feature>
<feature type="helix" evidence="11">
    <location>
        <begin position="1891"/>
        <end position="1893"/>
    </location>
</feature>
<feature type="helix" evidence="11">
    <location>
        <begin position="1897"/>
        <end position="1899"/>
    </location>
</feature>
<feature type="helix" evidence="11">
    <location>
        <begin position="1901"/>
        <end position="1910"/>
    </location>
</feature>
<feature type="turn" evidence="11">
    <location>
        <begin position="1912"/>
        <end position="1914"/>
    </location>
</feature>
<feature type="helix" evidence="11">
    <location>
        <begin position="1915"/>
        <end position="1918"/>
    </location>
</feature>
<feature type="helix" evidence="11">
    <location>
        <begin position="1933"/>
        <end position="1935"/>
    </location>
</feature>
<feature type="helix" evidence="11">
    <location>
        <begin position="1937"/>
        <end position="1940"/>
    </location>
</feature>
<feature type="strand" evidence="11">
    <location>
        <begin position="1942"/>
        <end position="1952"/>
    </location>
</feature>
<feature type="strand" evidence="11">
    <location>
        <begin position="1955"/>
        <end position="1962"/>
    </location>
</feature>
<feature type="strand" evidence="11">
    <location>
        <begin position="1970"/>
        <end position="1975"/>
    </location>
</feature>
<feature type="turn" evidence="11">
    <location>
        <begin position="1976"/>
        <end position="1978"/>
    </location>
</feature>
<feature type="strand" evidence="11">
    <location>
        <begin position="1979"/>
        <end position="1985"/>
    </location>
</feature>
<feature type="helix" evidence="11">
    <location>
        <begin position="1986"/>
        <end position="2000"/>
    </location>
</feature>
<feature type="helix" evidence="11">
    <location>
        <begin position="2004"/>
        <end position="2006"/>
    </location>
</feature>
<feature type="strand" evidence="11">
    <location>
        <begin position="2008"/>
        <end position="2012"/>
    </location>
</feature>
<feature type="turn" evidence="11">
    <location>
        <begin position="2015"/>
        <end position="2019"/>
    </location>
</feature>
<feature type="helix" evidence="11">
    <location>
        <begin position="2027"/>
        <end position="2031"/>
    </location>
</feature>
<feature type="helix" evidence="10">
    <location>
        <begin position="2132"/>
        <end position="2153"/>
    </location>
</feature>
<feature type="strand" evidence="10">
    <location>
        <begin position="2164"/>
        <end position="2169"/>
    </location>
</feature>
<feature type="strand" evidence="10">
    <location>
        <begin position="2172"/>
        <end position="2174"/>
    </location>
</feature>
<feature type="helix" evidence="10">
    <location>
        <begin position="2178"/>
        <end position="2189"/>
    </location>
</feature>
<feature type="strand" evidence="10">
    <location>
        <begin position="2194"/>
        <end position="2200"/>
    </location>
</feature>
<feature type="helix" evidence="10">
    <location>
        <begin position="2208"/>
        <end position="2218"/>
    </location>
</feature>
<feature type="strand" evidence="10">
    <location>
        <begin position="2221"/>
        <end position="2227"/>
    </location>
</feature>
<feature type="helix" evidence="10">
    <location>
        <begin position="2228"/>
        <end position="2230"/>
    </location>
</feature>
<feature type="helix" evidence="10">
    <location>
        <begin position="2234"/>
        <end position="2239"/>
    </location>
</feature>
<feature type="helix" evidence="10">
    <location>
        <begin position="2241"/>
        <end position="2251"/>
    </location>
</feature>
<feature type="helix" evidence="10">
    <location>
        <begin position="2255"/>
        <end position="2270"/>
    </location>
</feature>
<feature type="strand" evidence="10">
    <location>
        <begin position="2272"/>
        <end position="2274"/>
    </location>
</feature>
<feature type="helix" evidence="10">
    <location>
        <begin position="2291"/>
        <end position="2293"/>
    </location>
</feature>
<feature type="strand" evidence="10">
    <location>
        <begin position="2312"/>
        <end position="2317"/>
    </location>
</feature>
<feature type="helix" evidence="10">
    <location>
        <begin position="2322"/>
        <end position="2337"/>
    </location>
</feature>
<feature type="helix" evidence="10">
    <location>
        <begin position="2343"/>
        <end position="2346"/>
    </location>
</feature>
<feature type="helix" evidence="10">
    <location>
        <begin position="2348"/>
        <end position="2358"/>
    </location>
</feature>
<feature type="helix" evidence="10">
    <location>
        <begin position="2360"/>
        <end position="2362"/>
    </location>
</feature>
<feature type="helix" evidence="10">
    <location>
        <begin position="2364"/>
        <end position="2382"/>
    </location>
</feature>
<feature type="helix" evidence="10">
    <location>
        <begin position="2399"/>
        <end position="2412"/>
    </location>
</feature>
<feature type="turn" evidence="10">
    <location>
        <begin position="2413"/>
        <end position="2417"/>
    </location>
</feature>
<feature type="strand" evidence="10">
    <location>
        <begin position="2418"/>
        <end position="2420"/>
    </location>
</feature>
<proteinExistence type="evidence at protein level"/>
<sequence length="2957" mass="334884">MKGIEGVIMLSHDILPEKLLVSEKKHENVGSYFSDDIGEQSEQTEVSHFNLSLDDAFDIYADISIENQQELKNKDNNTNIWSSLGRGDDDHNLKKIINDAFKEKLPQLMEYRRKGYNVIGLDKEGIKKLEGMLKAVPPEIQQPTMKNLYSAAQELLNTLKQHPLLPENQDMIQQSNLVIRNLSDALEAINAVSKVNQVEWWEEVHKTNKAQSDRLIAATLEELFFKVKDKRLPGSNDDYCQQEREETERKIKDLLLYDGYQLTAEHFKFGRLRKSLLAESRVTRLKLAEYLEKKSVGILTAARDAKMYAMKILLAQTRNNGFNAKDLINAGQVNDRLLSFQQYARHIRAVDGEIDGIILSNPLVVACIKETNDEPAHIKIARAILPVSEELGTVSKVLRETKEKVQPSKPKEELNHPHQDWWNRGDELWKYIKKTSWNIKETSVHVTQMVGYEASKTASRAKHKLKESSYSESINGAVKGTALLLLDEIQQAENRIRQIPQFAWDVQEAVEQHSSVIQRTAYPDELPELSELLNEQLKHEEARWQAVKKQSRDKLQELIAPITRLAQEKWAQDLYFQLGEELRKERQDRWKDIQQFDEIMAEAVGQFAEMARELDSEAVRLAEHGHSGGKELQEKVAKWLRDLSKLKGKVKAGVAKITGTSLDNFSRSGMLARGMSEWAEDLKQSYLQETLQEGSAVAAELFERTLMEVVEENRTHFAKESDPEAERFLKRLALALKHAAENTTVYPPTPEEILAGSRSLPEDIRHWAEKKVVSGAISAAFRGGFKLVTGTFSLPVRVVIRGAKTGGTLYRGVRAINRSVRLGQGPATQVKSKFINQELSKTAFRLTLSLSPLVAWGMAASITAGRLYNEKDYPEKIIKNIVIDLPEELLWIGGYAGINAAIRAHAEKAIQQAIQHALDEQADKLALRINKEIAGKSADVNVEIIPQETSVSPAETAQSTPEPLSDFASTSQLTMPELIDIQDNNSAQQPKVRRKRDVSVESEISIDNLNIINANTREDKVNSEIKSELRSELKRFENSDANSPMSDVERAIFIDLFLYKNKYEVSESQQDYKNTWLKFRRELESQENKEIKEYLRFRSIIEAYEIYDKKRLDDDTIPEAGTIIKEVIDFFQKLKKENPITFMKLAEAMVKFQYYYEEEDENEDRYFKMAEIYYFLNKTENEKKSKTFHLDIIDKYPNENNRLLDEFFLNKNNNNPDLDEIIYKLQSMQEKYRESYEMLSKVENIHQVLSDDSKNEENIFLDNRIIAAQVFDGSINISLQDKKKWLNRYDQIRNEEGSDGWKLMHIESILINLRRINTAINLTAMKSESALLLIDKLLNFQKKARENILHISETPHEDFTSYSQFKTRKELGNDDSKYYAQFDNYKDNHDAEKEAKEILSQVVARASLSFSELFDKVESIKLFSFVYKNRDGGAPLAAPGRTVVIKFPGKDTGGLVISNLFLRNHVKRISTKEMEDLKPLTEGMYTRATQHRSLGSYYHIGSQSEHTNALEILSGMNKEELKTHLKKQGIWFGEPALFSNEYPKQENTGHLENTTLKNAIIGVSTIQNNAAANYLRSTMYESTGWEKLGDRFIPFYEIGRRKHYDREYEINSEQLTLDIITSIAIAYPAARGIVATIRSSAIPSILKSGLRGSALFKSLSLELGKMGFNASKVFGGAVYELIEPYPINSHLNRHNVFNKVKDTAWEFHTDVGLKGGGLKDFIDRFTKEPKEITISGYKFKRIKYNQENFDTMQRMALDYAYNPDSKGKIAQAQQAYKTGKEDYNAPQYDNFNGLSLDKKIERYISPDTDATTKGVLAGKMNESIKDINAFQTAKDAQSWKKSANKANKVVLTPQNLYLKGKPSECLPESVLMGWALQSSQDAKLSKMLMGIYSSNDITSNPLYKSLKELHANGNASKFNASATSISNINVSNLATSETKLFPTEISSVRVDAPKHTMLISKIKNRENKIKYVFYDPNYGMAYFDKHSDMAAFFQKKMQQYDFPDDSVSFHPLDYSNVSDIKISGRNLNEIIDGEIPLLYKQEGVQLEGITPRDGIYRVPPKNTLGVQETKHYIIVNNDIYQVEWDQTNNTWRVFDPSNTNRSRPTVPVKQDTNGEWFKHSETGLKGGGPIDDIRKYIARKSAIKIFNQSINYSATKWPPEPIDKNIHMIWIGTKNISEKNIKLSIDTAKKNPDYNTSIIYDSGISGHEGAKKFMLEKFQDSNVNIIDFRKKSYFSQLKQEPSFAYYEQVIAENKYAQASDILRLLVLKYEGGIYKDIDDIQVKGFGSLTFPKGIGVMREYAPEAGKATAFPNTPIAVTKNNPIINKTLDLAVSNYQRGEKNVLKLAGPDVFTQALYQEIPGLDSKVLNAQLYQLELAKRQALGVPLEKPKNFADEQLTSAEKEKINRPYQSIRGLSGYVENGADHSWAVDTNIPSTSTQTSTIVTPLAPKTEMLPPVPSSSTKSSTSAPVLQEKISYNLATDIDATDYLNQLKQKTNINNKISSPAGQCESLMKPVSDFMRENGFTDIRYRGMFIWNNATEQIPMNHFVVVGKKVGKDYVFDVSAHQFENKGMPDLNGPLILAAEDWAKKYRGATTRKLIYYSDFKNASTATNTYNALPRELVLESMEGKTFITSPNWYQTFKRTHNIHPEVTVSDPATFSLNYSVNPTAENLSPPPPPPIPSHGQVPKTVTPPPPPMRSPLSLSQPLERLPANKTKPIGFNPGENKASFSKLEEAGKHYYKDDKSRQAAPVNTMSDFDNRYLSHTTEAPAPSNVAHLAPGNIYNTKVTAKGAEKPAYDIYISKDGESLITSSSYKVDDITTDSKFGKPLPYSEIMFNSLKKSGVDPKNLKRSVQASIENKVTQDVISAIGTRIQRGQVIRVSPTENPDAFYTLLGTDNCKATLHMLNQHAEEFGHKVVTSIEFKGTGYLVMNIGTSTQTSTIVTPPPMPGTSQLVQ</sequence>
<reference key="1">
    <citation type="journal article" date="2009" name="BMC Genomics">
        <title>Comparative genomics of the emerging human pathogen Photorhabdus asymbiotica with the insect pathogen Photorhabdus luminescens.</title>
        <authorList>
            <person name="Wilkinson P."/>
            <person name="Waterfield N.R."/>
            <person name="Crossman L."/>
            <person name="Corton C."/>
            <person name="Sanchez-Contreras M."/>
            <person name="Vlisidou I."/>
            <person name="Barron A."/>
            <person name="Bignell A."/>
            <person name="Clark L."/>
            <person name="Ormond D."/>
            <person name="Mayho M."/>
            <person name="Bason N."/>
            <person name="Smith F."/>
            <person name="Simmonds M."/>
            <person name="Churcher C."/>
            <person name="Harris D."/>
            <person name="Thompson N.R."/>
            <person name="Quail M."/>
            <person name="Parkhill J."/>
            <person name="ffrench-Constant R.H."/>
        </authorList>
    </citation>
    <scope>NUCLEOTIDE SEQUENCE [LARGE SCALE GENOMIC DNA]</scope>
    <source>
        <strain>ATCC 43949 / 3105-77</strain>
    </source>
</reference>
<reference key="2">
    <citation type="journal article" date="2015" name="FASEB J.">
        <title>Intracellular plasma membrane guidance of Photorhabdus asymbiotica toxin is crucial for cell toxicity.</title>
        <authorList>
            <person name="Jank T."/>
            <person name="Trillhaase C."/>
            <person name="Brozda N."/>
            <person name="Steinemann M."/>
            <person name="Schwan C."/>
            <person name="Suess R."/>
            <person name="Aktories K."/>
        </authorList>
    </citation>
    <scope>SUBCELLULAR LOCATION</scope>
    <scope>MUTAGENESIS OF 2134-ARG-LYS-2135 AND 2139-ARG-LYS-2140</scope>
    <source>
        <strain>ATCC 43950</strain>
    </source>
</reference>
<reference key="3">
    <citation type="journal article" date="2013" name="Nat. Struct. Mol. Biol.">
        <title>A bacterial toxin catalyzing tyrosine glycosylation of Rho and deamidation of Gq and Gi proteins.</title>
        <authorList>
            <person name="Jank T."/>
            <person name="Bogdanovic X."/>
            <person name="Wirth C."/>
            <person name="Haaf E."/>
            <person name="Spoerner M."/>
            <person name="Boehmer K.E."/>
            <person name="Steinemann M."/>
            <person name="Orth J.H."/>
            <person name="Kalbitzer H.R."/>
            <person name="Warscheid B."/>
            <person name="Hunte C."/>
            <person name="Aktories K."/>
        </authorList>
    </citation>
    <scope>X-RAY CRYSTALLOGRAPHY (1.80 ANGSTROMS) OF 2114-2449 IN COMPLEX WITH CALCIUM AND UDP-GLCNAC</scope>
    <scope>FUNCTION</scope>
    <scope>CATALYTIC ACTIVITY</scope>
    <scope>COFACTOR</scope>
    <scope>SUBSTRATE SPECIFICITY</scope>
    <scope>DOMAIN</scope>
    <scope>MUTAGENESIS OF TRP-2170; ASP-2260; ARG-2263; ASP-2276; ASP-2278; ASP-2279; 2276-ASP--ASP-2279; ASN-2312 AND CYS-2509</scope>
    <source>
        <strain>ATCC 43950</strain>
    </source>
</reference>
<protein>
    <recommendedName>
        <fullName evidence="5">Toxin PAU_02230</fullName>
    </recommendedName>
    <alternativeName>
        <fullName evidence="4">Photorhabdus asymbiotica toxin</fullName>
        <shortName evidence="4">PaTox</shortName>
    </alternativeName>
    <domain>
        <recommendedName>
            <fullName evidence="6">Protein N-acetylglucosaminyltransferase</fullName>
            <shortName evidence="6">Protein O-GlcNAc transferase</shortName>
            <ecNumber evidence="2">2.4.1.-</ecNumber>
        </recommendedName>
        <alternativeName>
            <fullName evidence="4">PaToxG</fullName>
        </alternativeName>
        <alternativeName>
            <fullName evidence="4">Tyrosine glycosyltransferase</fullName>
        </alternativeName>
    </domain>
    <domain>
        <recommendedName>
            <fullName evidence="6">Protein-glutamine amidohydrolase</fullName>
            <ecNumber evidence="2">3.5.1.44</ecNumber>
        </recommendedName>
        <alternativeName>
            <fullName evidence="4">Glutamine deamidase</fullName>
        </alternativeName>
        <alternativeName>
            <fullName evidence="4">PaToxD</fullName>
        </alternativeName>
        <alternativeName>
            <fullName evidence="5">Protein-glutamine glutaminase</fullName>
        </alternativeName>
    </domain>
</protein>
<organism evidence="8">
    <name type="scientific">Photorhabdus asymbiotica subsp. asymbiotica (strain ATCC 43949 / 3105-77)</name>
    <name type="common">Xenorhabdus luminescens (strain 2)</name>
    <dbReference type="NCBI Taxonomy" id="553480"/>
    <lineage>
        <taxon>Bacteria</taxon>
        <taxon>Pseudomonadati</taxon>
        <taxon>Pseudomonadota</taxon>
        <taxon>Gammaproteobacteria</taxon>
        <taxon>Enterobacterales</taxon>
        <taxon>Morganellaceae</taxon>
        <taxon>Photorhabdus</taxon>
    </lineage>
</organism>
<keyword id="KW-0002">3D-structure</keyword>
<keyword id="KW-0106">Calcium</keyword>
<keyword id="KW-0328">Glycosyltransferase</keyword>
<keyword id="KW-1032">Host cell membrane</keyword>
<keyword id="KW-1043">Host membrane</keyword>
<keyword id="KW-0378">Hydrolase</keyword>
<keyword id="KW-0472">Membrane</keyword>
<keyword id="KW-0479">Metal-binding</keyword>
<keyword id="KW-0511">Multifunctional enzyme</keyword>
<keyword id="KW-0964">Secreted</keyword>
<keyword id="KW-0800">Toxin</keyword>
<keyword id="KW-0808">Transferase</keyword>
<keyword id="KW-0843">Virulence</keyword>
<evidence type="ECO:0000256" key="1">
    <source>
        <dbReference type="SAM" id="MobiDB-lite"/>
    </source>
</evidence>
<evidence type="ECO:0000269" key="2">
    <source>
    </source>
</evidence>
<evidence type="ECO:0000269" key="3">
    <source>
    </source>
</evidence>
<evidence type="ECO:0000303" key="4">
    <source>
    </source>
</evidence>
<evidence type="ECO:0000305" key="5"/>
<evidence type="ECO:0000305" key="6">
    <source>
    </source>
</evidence>
<evidence type="ECO:0000312" key="7">
    <source>
        <dbReference type="EMBL" id="CAQ84322.1"/>
    </source>
</evidence>
<evidence type="ECO:0000312" key="8">
    <source>
        <dbReference type="Proteomes" id="UP000002747"/>
    </source>
</evidence>
<evidence type="ECO:0007744" key="9">
    <source>
        <dbReference type="PDB" id="4MIX"/>
    </source>
</evidence>
<evidence type="ECO:0007829" key="10">
    <source>
        <dbReference type="PDB" id="4MIX"/>
    </source>
</evidence>
<evidence type="ECO:0007829" key="11">
    <source>
        <dbReference type="PDB" id="6HV6"/>
    </source>
</evidence>